<organism>
    <name type="scientific">Xenopus laevis</name>
    <name type="common">African clawed frog</name>
    <dbReference type="NCBI Taxonomy" id="8355"/>
    <lineage>
        <taxon>Eukaryota</taxon>
        <taxon>Metazoa</taxon>
        <taxon>Chordata</taxon>
        <taxon>Craniata</taxon>
        <taxon>Vertebrata</taxon>
        <taxon>Euteleostomi</taxon>
        <taxon>Amphibia</taxon>
        <taxon>Batrachia</taxon>
        <taxon>Anura</taxon>
        <taxon>Pipoidea</taxon>
        <taxon>Pipidae</taxon>
        <taxon>Xenopodinae</taxon>
        <taxon>Xenopus</taxon>
        <taxon>Xenopus</taxon>
    </lineage>
</organism>
<reference key="1">
    <citation type="submission" date="2006-12" db="EMBL/GenBank/DDBJ databases">
        <authorList>
            <consortium name="NIH - Xenopus Gene Collection (XGC) project"/>
        </authorList>
    </citation>
    <scope>NUCLEOTIDE SEQUENCE [LARGE SCALE MRNA]</scope>
    <source>
        <tissue>Embryo</tissue>
    </source>
</reference>
<evidence type="ECO:0000250" key="1">
    <source>
        <dbReference type="UniProtKB" id="Q66K64"/>
    </source>
</evidence>
<evidence type="ECO:0000256" key="2">
    <source>
        <dbReference type="SAM" id="MobiDB-lite"/>
    </source>
</evidence>
<keyword id="KW-0391">Immunity</keyword>
<keyword id="KW-0479">Metal-binding</keyword>
<keyword id="KW-1185">Reference proteome</keyword>
<keyword id="KW-0833">Ubl conjugation pathway</keyword>
<keyword id="KW-0862">Zinc</keyword>
<comment type="function">
    <text evidence="1">Substrate-recognition component of the DCX(DCAF15) complex, a cullin-4-RING E3 ubiquitin-protein ligase complex that mediates ubiquitination and degradation of target proteins. The DCX(DCAF15) complex acts as a regulator of the natural killer (NK) cells effector functions.</text>
</comment>
<comment type="pathway">
    <text evidence="1">Protein modification; protein ubiquitination.</text>
</comment>
<comment type="subunit">
    <text evidence="1">Component of the DCX(DCAF15) complex, also named CLR4(DCAF15) complex.</text>
</comment>
<name>DCA15_XENLA</name>
<accession>A2BDA5</accession>
<dbReference type="EMBL" id="BC130142">
    <property type="protein sequence ID" value="AAI30143.1"/>
    <property type="molecule type" value="mRNA"/>
</dbReference>
<dbReference type="RefSeq" id="NP_001091275.1">
    <property type="nucleotide sequence ID" value="NM_001097806.1"/>
</dbReference>
<dbReference type="SMR" id="A2BDA5"/>
<dbReference type="UniPathway" id="UPA00143"/>
<dbReference type="Proteomes" id="UP000186698">
    <property type="component" value="Unplaced"/>
</dbReference>
<dbReference type="GO" id="GO:0080008">
    <property type="term" value="C:Cul4-RING E3 ubiquitin ligase complex"/>
    <property type="evidence" value="ECO:0000250"/>
    <property type="project" value="UniProtKB"/>
</dbReference>
<dbReference type="GO" id="GO:0046872">
    <property type="term" value="F:metal ion binding"/>
    <property type="evidence" value="ECO:0007669"/>
    <property type="project" value="UniProtKB-KW"/>
</dbReference>
<dbReference type="GO" id="GO:0002376">
    <property type="term" value="P:immune system process"/>
    <property type="evidence" value="ECO:0007669"/>
    <property type="project" value="UniProtKB-KW"/>
</dbReference>
<dbReference type="GO" id="GO:0000209">
    <property type="term" value="P:protein polyubiquitination"/>
    <property type="evidence" value="ECO:0000250"/>
    <property type="project" value="UniProtKB"/>
</dbReference>
<dbReference type="GO" id="GO:0016567">
    <property type="term" value="P:protein ubiquitination"/>
    <property type="evidence" value="ECO:0000318"/>
    <property type="project" value="GO_Central"/>
</dbReference>
<dbReference type="GO" id="GO:0032814">
    <property type="term" value="P:regulation of natural killer cell activation"/>
    <property type="evidence" value="ECO:0000250"/>
    <property type="project" value="UniProtKB"/>
</dbReference>
<dbReference type="CDD" id="cd20913">
    <property type="entry name" value="DCAF15-CTD"/>
    <property type="match status" value="1"/>
</dbReference>
<dbReference type="CDD" id="cd20917">
    <property type="entry name" value="DCAF15-NTD"/>
    <property type="match status" value="1"/>
</dbReference>
<dbReference type="InterPro" id="IPR038914">
    <property type="entry name" value="DCAF15"/>
</dbReference>
<dbReference type="InterPro" id="IPR047319">
    <property type="entry name" value="DCAF15_C"/>
</dbReference>
<dbReference type="InterPro" id="IPR032734">
    <property type="entry name" value="DCAF15_WD40"/>
</dbReference>
<dbReference type="PANTHER" id="PTHR28541">
    <property type="entry name" value="DDB1- AND CUL4-ASSOCIATED FACTOR 15"/>
    <property type="match status" value="1"/>
</dbReference>
<dbReference type="PANTHER" id="PTHR28541:SF1">
    <property type="entry name" value="DDB1- AND CUL4-ASSOCIATED FACTOR 15"/>
    <property type="match status" value="1"/>
</dbReference>
<dbReference type="Pfam" id="PF14939">
    <property type="entry name" value="DCAF15_WD40"/>
    <property type="match status" value="1"/>
</dbReference>
<proteinExistence type="evidence at transcript level"/>
<gene>
    <name evidence="1" type="primary">dcaf15</name>
</gene>
<sequence length="600" mass="66643">MAPSSKSERNSGAGSAGGGPGGTGGKRAVGRRREHVLKQLERVKISGQLSPRLFRKLPPRVCVSLKNIVDEDFLYAGHIFLGFSKCGRYVLSYTSSSGDDDFSFYIYHLYWWEFNVHSKLKLVRQVRLFQDEEIYSDLYLTVCEWPSDASKVIVFGFNTRSANGMLMNMMMMSDENHRDIYISTVAVPPRGRCAACQDASRAHPGDPSAQCLRHGFMLHTKYQVVYPFPTFQPAFQLKKDQVVLLNTSYSLVACAVSVHSAGDSSFCQILYDHTALPPAPPSSPGPWSPEAAPAFPSLGVEVVPAQPSGAPEPSPAIAKAKEFVADIFRRAKEAKGSPLEETRLPSSLGPSSSRCRPSLEPQAPSGEVVPRDSPPAAETTAPEPGYINYTKLHYVLQSGEGTEPEDEFEDDKISLPFVVTDLRGRNLRPMRERTDMQGQYLTVEQLTLDFEYVINEVIRHDATWGHQFCSFSDYDIVILEVCPETNQVLINIGLLLLAFPAPTEEGQLRPKTYHTSLKVAWDLNTGIFETVSVGDLTEVKGQTSGSVWSSYRKSCVDMVMKWLVPESSGRYVNRMTNEALHKGCSLKVLADSERYTWIVL</sequence>
<feature type="chain" id="PRO_0000314487" description="DDB1- and CUL4-associated factor 15">
    <location>
        <begin position="1"/>
        <end position="600"/>
    </location>
</feature>
<feature type="region of interest" description="Disordered" evidence="2">
    <location>
        <begin position="1"/>
        <end position="29"/>
    </location>
</feature>
<feature type="region of interest" description="Disordered" evidence="2">
    <location>
        <begin position="334"/>
        <end position="384"/>
    </location>
</feature>
<feature type="compositionally biased region" description="Gly residues" evidence="2">
    <location>
        <begin position="14"/>
        <end position="27"/>
    </location>
</feature>
<feature type="compositionally biased region" description="Basic and acidic residues" evidence="2">
    <location>
        <begin position="334"/>
        <end position="343"/>
    </location>
</feature>
<feature type="compositionally biased region" description="Low complexity" evidence="2">
    <location>
        <begin position="344"/>
        <end position="359"/>
    </location>
</feature>
<feature type="compositionally biased region" description="Low complexity" evidence="2">
    <location>
        <begin position="374"/>
        <end position="384"/>
    </location>
</feature>
<feature type="binding site" evidence="1">
    <location>
        <position position="193"/>
    </location>
    <ligand>
        <name>Zn(2+)</name>
        <dbReference type="ChEBI" id="CHEBI:29105"/>
    </ligand>
</feature>
<feature type="binding site" evidence="1">
    <location>
        <position position="196"/>
    </location>
    <ligand>
        <name>Zn(2+)</name>
        <dbReference type="ChEBI" id="CHEBI:29105"/>
    </ligand>
</feature>
<feature type="binding site" evidence="1">
    <location>
        <position position="211"/>
    </location>
    <ligand>
        <name>Zn(2+)</name>
        <dbReference type="ChEBI" id="CHEBI:29105"/>
    </ligand>
</feature>
<feature type="binding site" evidence="1">
    <location>
        <position position="214"/>
    </location>
    <ligand>
        <name>Zn(2+)</name>
        <dbReference type="ChEBI" id="CHEBI:29105"/>
    </ligand>
</feature>
<protein>
    <recommendedName>
        <fullName evidence="1">DDB1- and CUL4-associated factor 15</fullName>
    </recommendedName>
</protein>